<evidence type="ECO:0000255" key="1">
    <source>
        <dbReference type="HAMAP-Rule" id="MF_01825"/>
    </source>
</evidence>
<feature type="chain" id="PRO_1000188252" description="Erythronate-4-phosphate dehydrogenase">
    <location>
        <begin position="1"/>
        <end position="355"/>
    </location>
</feature>
<feature type="active site" evidence="1">
    <location>
        <position position="206"/>
    </location>
</feature>
<feature type="active site" evidence="1">
    <location>
        <position position="234"/>
    </location>
</feature>
<feature type="active site" description="Proton donor" evidence="1">
    <location>
        <position position="251"/>
    </location>
</feature>
<feature type="binding site" evidence="1">
    <location>
        <position position="45"/>
    </location>
    <ligand>
        <name>substrate</name>
    </ligand>
</feature>
<feature type="binding site" evidence="1">
    <location>
        <position position="66"/>
    </location>
    <ligand>
        <name>substrate</name>
    </ligand>
</feature>
<feature type="binding site" evidence="1">
    <location>
        <position position="146"/>
    </location>
    <ligand>
        <name>NAD(+)</name>
        <dbReference type="ChEBI" id="CHEBI:57540"/>
    </ligand>
</feature>
<feature type="binding site" evidence="1">
    <location>
        <position position="229"/>
    </location>
    <ligand>
        <name>NAD(+)</name>
        <dbReference type="ChEBI" id="CHEBI:57540"/>
    </ligand>
</feature>
<feature type="binding site" evidence="1">
    <location>
        <position position="254"/>
    </location>
    <ligand>
        <name>NAD(+)</name>
        <dbReference type="ChEBI" id="CHEBI:57540"/>
    </ligand>
</feature>
<feature type="binding site" evidence="1">
    <location>
        <position position="255"/>
    </location>
    <ligand>
        <name>substrate</name>
    </ligand>
</feature>
<organism>
    <name type="scientific">Acinetobacter baumannii (strain AB0057)</name>
    <dbReference type="NCBI Taxonomy" id="480119"/>
    <lineage>
        <taxon>Bacteria</taxon>
        <taxon>Pseudomonadati</taxon>
        <taxon>Pseudomonadota</taxon>
        <taxon>Gammaproteobacteria</taxon>
        <taxon>Moraxellales</taxon>
        <taxon>Moraxellaceae</taxon>
        <taxon>Acinetobacter</taxon>
        <taxon>Acinetobacter calcoaceticus/baumannii complex</taxon>
    </lineage>
</organism>
<comment type="function">
    <text evidence="1">Catalyzes the oxidation of erythronate-4-phosphate to 3-hydroxy-2-oxo-4-phosphonooxybutanoate.</text>
</comment>
<comment type="catalytic activity">
    <reaction evidence="1">
        <text>4-phospho-D-erythronate + NAD(+) = (R)-3-hydroxy-2-oxo-4-phosphooxybutanoate + NADH + H(+)</text>
        <dbReference type="Rhea" id="RHEA:18829"/>
        <dbReference type="ChEBI" id="CHEBI:15378"/>
        <dbReference type="ChEBI" id="CHEBI:57540"/>
        <dbReference type="ChEBI" id="CHEBI:57945"/>
        <dbReference type="ChEBI" id="CHEBI:58538"/>
        <dbReference type="ChEBI" id="CHEBI:58766"/>
        <dbReference type="EC" id="1.1.1.290"/>
    </reaction>
</comment>
<comment type="pathway">
    <text evidence="1">Cofactor biosynthesis; pyridoxine 5'-phosphate biosynthesis; pyridoxine 5'-phosphate from D-erythrose 4-phosphate: step 2/5.</text>
</comment>
<comment type="subunit">
    <text evidence="1">Homodimer.</text>
</comment>
<comment type="subcellular location">
    <subcellularLocation>
        <location evidence="1">Cytoplasm</location>
    </subcellularLocation>
</comment>
<comment type="similarity">
    <text evidence="1">Belongs to the D-isomer specific 2-hydroxyacid dehydrogenase family. PdxB subfamily.</text>
</comment>
<proteinExistence type="inferred from homology"/>
<keyword id="KW-0963">Cytoplasm</keyword>
<keyword id="KW-0520">NAD</keyword>
<keyword id="KW-0560">Oxidoreductase</keyword>
<keyword id="KW-0664">Pyridoxine biosynthesis</keyword>
<name>PDXB_ACIB5</name>
<protein>
    <recommendedName>
        <fullName evidence="1">Erythronate-4-phosphate dehydrogenase</fullName>
        <ecNumber evidence="1">1.1.1.290</ecNumber>
    </recommendedName>
</protein>
<accession>B7I5Z2</accession>
<sequence length="355" mass="39426">MKIVADENLAFTDYFFSEFGDIQHKAGRTLTHTDVQDAEALLVRSVTAVNESLIQNTALKYVGSATIGTDHLDIQALEKHGITWANAAGCNAQAVAEYVITALLHLDASLLEQQEKFTLGIVGLGNVGKRLVYMAQLLGWKVIGFDPYVQLDSIENVSFQALLQQANAVSIHVPLTKKGEHATYHLFDEKAFAALQPNTILINSARGPVVKEAALIEDIQRTQRKVVLDVFEHEPVISEELLNMLALATPHIAGYSLEGKARGTQMIYEAFCQKFGYEINKRFETQLPACEDYFSGHDLKAVLKQKLSQIYDIAQDDANIRACVKEGKVEQKAFDLLRKNYPLRREWAAHGGPQA</sequence>
<dbReference type="EC" id="1.1.1.290" evidence="1"/>
<dbReference type="EMBL" id="CP001182">
    <property type="protein sequence ID" value="ACJ42385.1"/>
    <property type="molecule type" value="Genomic_DNA"/>
</dbReference>
<dbReference type="RefSeq" id="WP_000706080.1">
    <property type="nucleotide sequence ID" value="NC_011586.2"/>
</dbReference>
<dbReference type="SMR" id="B7I5Z2"/>
<dbReference type="KEGG" id="abn:AB57_3051"/>
<dbReference type="HOGENOM" id="CLU_019796_4_0_6"/>
<dbReference type="UniPathway" id="UPA00244">
    <property type="reaction ID" value="UER00310"/>
</dbReference>
<dbReference type="Proteomes" id="UP000007094">
    <property type="component" value="Chromosome"/>
</dbReference>
<dbReference type="GO" id="GO:0005829">
    <property type="term" value="C:cytosol"/>
    <property type="evidence" value="ECO:0007669"/>
    <property type="project" value="TreeGrafter"/>
</dbReference>
<dbReference type="GO" id="GO:0033711">
    <property type="term" value="F:4-phosphoerythronate dehydrogenase activity"/>
    <property type="evidence" value="ECO:0007669"/>
    <property type="project" value="UniProtKB-EC"/>
</dbReference>
<dbReference type="GO" id="GO:0051287">
    <property type="term" value="F:NAD binding"/>
    <property type="evidence" value="ECO:0007669"/>
    <property type="project" value="InterPro"/>
</dbReference>
<dbReference type="GO" id="GO:0046983">
    <property type="term" value="F:protein dimerization activity"/>
    <property type="evidence" value="ECO:0007669"/>
    <property type="project" value="InterPro"/>
</dbReference>
<dbReference type="GO" id="GO:0036001">
    <property type="term" value="P:'de novo' pyridoxal 5'-phosphate biosynthetic process"/>
    <property type="evidence" value="ECO:0007669"/>
    <property type="project" value="TreeGrafter"/>
</dbReference>
<dbReference type="GO" id="GO:0008615">
    <property type="term" value="P:pyridoxine biosynthetic process"/>
    <property type="evidence" value="ECO:0007669"/>
    <property type="project" value="UniProtKB-UniRule"/>
</dbReference>
<dbReference type="CDD" id="cd12158">
    <property type="entry name" value="ErythrP_dh"/>
    <property type="match status" value="1"/>
</dbReference>
<dbReference type="Gene3D" id="3.30.1370.170">
    <property type="match status" value="1"/>
</dbReference>
<dbReference type="Gene3D" id="3.40.50.720">
    <property type="entry name" value="NAD(P)-binding Rossmann-like Domain"/>
    <property type="match status" value="2"/>
</dbReference>
<dbReference type="HAMAP" id="MF_01825">
    <property type="entry name" value="PdxB"/>
    <property type="match status" value="1"/>
</dbReference>
<dbReference type="InterPro" id="IPR006139">
    <property type="entry name" value="D-isomer_2_OHA_DH_cat_dom"/>
</dbReference>
<dbReference type="InterPro" id="IPR029752">
    <property type="entry name" value="D-isomer_DH_CS1"/>
</dbReference>
<dbReference type="InterPro" id="IPR006140">
    <property type="entry name" value="D-isomer_DH_NAD-bd"/>
</dbReference>
<dbReference type="InterPro" id="IPR020921">
    <property type="entry name" value="Erythronate-4-P_DHase"/>
</dbReference>
<dbReference type="InterPro" id="IPR024531">
    <property type="entry name" value="Erythronate-4-P_DHase_dimer"/>
</dbReference>
<dbReference type="InterPro" id="IPR036291">
    <property type="entry name" value="NAD(P)-bd_dom_sf"/>
</dbReference>
<dbReference type="InterPro" id="IPR038251">
    <property type="entry name" value="PdxB_dimer_sf"/>
</dbReference>
<dbReference type="PANTHER" id="PTHR42938">
    <property type="entry name" value="FORMATE DEHYDROGENASE 1"/>
    <property type="match status" value="1"/>
</dbReference>
<dbReference type="PANTHER" id="PTHR42938:SF9">
    <property type="entry name" value="FORMATE DEHYDROGENASE 1"/>
    <property type="match status" value="1"/>
</dbReference>
<dbReference type="Pfam" id="PF00389">
    <property type="entry name" value="2-Hacid_dh"/>
    <property type="match status" value="1"/>
</dbReference>
<dbReference type="Pfam" id="PF02826">
    <property type="entry name" value="2-Hacid_dh_C"/>
    <property type="match status" value="1"/>
</dbReference>
<dbReference type="Pfam" id="PF11890">
    <property type="entry name" value="DUF3410"/>
    <property type="match status" value="1"/>
</dbReference>
<dbReference type="SUPFAM" id="SSF52283">
    <property type="entry name" value="Formate/glycerate dehydrogenase catalytic domain-like"/>
    <property type="match status" value="1"/>
</dbReference>
<dbReference type="SUPFAM" id="SSF51735">
    <property type="entry name" value="NAD(P)-binding Rossmann-fold domains"/>
    <property type="match status" value="1"/>
</dbReference>
<dbReference type="PROSITE" id="PS00065">
    <property type="entry name" value="D_2_HYDROXYACID_DH_1"/>
    <property type="match status" value="1"/>
</dbReference>
<reference key="1">
    <citation type="journal article" date="2008" name="J. Bacteriol.">
        <title>Comparative genome sequence analysis of multidrug-resistant Acinetobacter baumannii.</title>
        <authorList>
            <person name="Adams M.D."/>
            <person name="Goglin K."/>
            <person name="Molyneaux N."/>
            <person name="Hujer K.M."/>
            <person name="Lavender H."/>
            <person name="Jamison J.J."/>
            <person name="MacDonald I.J."/>
            <person name="Martin K.M."/>
            <person name="Russo T."/>
            <person name="Campagnari A.A."/>
            <person name="Hujer A.M."/>
            <person name="Bonomo R.A."/>
            <person name="Gill S.R."/>
        </authorList>
    </citation>
    <scope>NUCLEOTIDE SEQUENCE [LARGE SCALE GENOMIC DNA]</scope>
    <source>
        <strain>AB0057</strain>
    </source>
</reference>
<gene>
    <name evidence="1" type="primary">pdxB</name>
    <name type="ordered locus">AB57_3051</name>
</gene>